<reference key="1">
    <citation type="journal article" date="2009" name="PLoS Genet.">
        <title>Organised genome dynamics in the Escherichia coli species results in highly diverse adaptive paths.</title>
        <authorList>
            <person name="Touchon M."/>
            <person name="Hoede C."/>
            <person name="Tenaillon O."/>
            <person name="Barbe V."/>
            <person name="Baeriswyl S."/>
            <person name="Bidet P."/>
            <person name="Bingen E."/>
            <person name="Bonacorsi S."/>
            <person name="Bouchier C."/>
            <person name="Bouvet O."/>
            <person name="Calteau A."/>
            <person name="Chiapello H."/>
            <person name="Clermont O."/>
            <person name="Cruveiller S."/>
            <person name="Danchin A."/>
            <person name="Diard M."/>
            <person name="Dossat C."/>
            <person name="Karoui M.E."/>
            <person name="Frapy E."/>
            <person name="Garry L."/>
            <person name="Ghigo J.M."/>
            <person name="Gilles A.M."/>
            <person name="Johnson J."/>
            <person name="Le Bouguenec C."/>
            <person name="Lescat M."/>
            <person name="Mangenot S."/>
            <person name="Martinez-Jehanne V."/>
            <person name="Matic I."/>
            <person name="Nassif X."/>
            <person name="Oztas S."/>
            <person name="Petit M.A."/>
            <person name="Pichon C."/>
            <person name="Rouy Z."/>
            <person name="Ruf C.S."/>
            <person name="Schneider D."/>
            <person name="Tourret J."/>
            <person name="Vacherie B."/>
            <person name="Vallenet D."/>
            <person name="Medigue C."/>
            <person name="Rocha E.P.C."/>
            <person name="Denamur E."/>
        </authorList>
    </citation>
    <scope>NUCLEOTIDE SEQUENCE [LARGE SCALE GENOMIC DNA]</scope>
    <source>
        <strain>UMN026 / ExPEC</strain>
    </source>
</reference>
<organism>
    <name type="scientific">Escherichia coli O17:K52:H18 (strain UMN026 / ExPEC)</name>
    <dbReference type="NCBI Taxonomy" id="585056"/>
    <lineage>
        <taxon>Bacteria</taxon>
        <taxon>Pseudomonadati</taxon>
        <taxon>Pseudomonadota</taxon>
        <taxon>Gammaproteobacteria</taxon>
        <taxon>Enterobacterales</taxon>
        <taxon>Enterobacteriaceae</taxon>
        <taxon>Escherichia</taxon>
    </lineage>
</organism>
<name>CYSD_ECOLU</name>
<proteinExistence type="inferred from homology"/>
<sequence length="302" mass="35203">MDQKRLTHLRQLEAESIHIIREVAAEFSNPVMLYSIGKDSSVMLHLARKAFYPGTLPFPLLHVDTGWKFREMYEFRDRTAKAYGCELLVHKNPEGVAMGINPFVHGSAKHTDIMKTEGLKQALNKYGFDAAFGGARRDEEKSRAKERIYSFRDRFHRWDPKNQRPELWHNYNGQINKGESIRVFPLSNWTEQDIWQYIWLENIDIVPLYLAAERPVLERDGMLMMIDDNRIDLQPGEVIKKRMVRFRTLGCWPLTGAVESNAQTLPEIIEEMLVSTTSERQGRVIDRDQAGSMELKKRQGYF</sequence>
<dbReference type="EC" id="2.7.7.4" evidence="1"/>
<dbReference type="EMBL" id="CU928163">
    <property type="protein sequence ID" value="CAR14243.1"/>
    <property type="molecule type" value="Genomic_DNA"/>
</dbReference>
<dbReference type="RefSeq" id="WP_000372392.1">
    <property type="nucleotide sequence ID" value="NC_011751.1"/>
</dbReference>
<dbReference type="RefSeq" id="YP_002413765.1">
    <property type="nucleotide sequence ID" value="NC_011751.1"/>
</dbReference>
<dbReference type="SMR" id="B7N6Y2"/>
<dbReference type="STRING" id="585056.ECUMN_3076"/>
<dbReference type="GeneID" id="89517568"/>
<dbReference type="KEGG" id="eum:ECUMN_3076"/>
<dbReference type="PATRIC" id="fig|585056.7.peg.3252"/>
<dbReference type="HOGENOM" id="CLU_043026_0_0_6"/>
<dbReference type="UniPathway" id="UPA00140">
    <property type="reaction ID" value="UER00204"/>
</dbReference>
<dbReference type="Proteomes" id="UP000007097">
    <property type="component" value="Chromosome"/>
</dbReference>
<dbReference type="GO" id="GO:0005524">
    <property type="term" value="F:ATP binding"/>
    <property type="evidence" value="ECO:0007669"/>
    <property type="project" value="UniProtKB-KW"/>
</dbReference>
<dbReference type="GO" id="GO:0004781">
    <property type="term" value="F:sulfate adenylyltransferase (ATP) activity"/>
    <property type="evidence" value="ECO:0007669"/>
    <property type="project" value="UniProtKB-UniRule"/>
</dbReference>
<dbReference type="GO" id="GO:0070814">
    <property type="term" value="P:hydrogen sulfide biosynthetic process"/>
    <property type="evidence" value="ECO:0007669"/>
    <property type="project" value="UniProtKB-UniRule"/>
</dbReference>
<dbReference type="GO" id="GO:0000103">
    <property type="term" value="P:sulfate assimilation"/>
    <property type="evidence" value="ECO:0007669"/>
    <property type="project" value="UniProtKB-UniRule"/>
</dbReference>
<dbReference type="CDD" id="cd23946">
    <property type="entry name" value="Sulfate_adenylyltransferase_2"/>
    <property type="match status" value="1"/>
</dbReference>
<dbReference type="FunFam" id="3.40.50.620:FF:000002">
    <property type="entry name" value="Sulfate adenylyltransferase subunit 2"/>
    <property type="match status" value="1"/>
</dbReference>
<dbReference type="Gene3D" id="3.40.50.620">
    <property type="entry name" value="HUPs"/>
    <property type="match status" value="1"/>
</dbReference>
<dbReference type="HAMAP" id="MF_00064">
    <property type="entry name" value="Sulf_adenylyltr_sub2"/>
    <property type="match status" value="1"/>
</dbReference>
<dbReference type="InterPro" id="IPR002500">
    <property type="entry name" value="PAPS_reduct_dom"/>
</dbReference>
<dbReference type="InterPro" id="IPR014729">
    <property type="entry name" value="Rossmann-like_a/b/a_fold"/>
</dbReference>
<dbReference type="InterPro" id="IPR011784">
    <property type="entry name" value="SO4_adenylTrfase_ssu"/>
</dbReference>
<dbReference type="InterPro" id="IPR050128">
    <property type="entry name" value="Sulfate_adenylyltrnsfr_sub2"/>
</dbReference>
<dbReference type="NCBIfam" id="TIGR02039">
    <property type="entry name" value="CysD"/>
    <property type="match status" value="1"/>
</dbReference>
<dbReference type="NCBIfam" id="NF003587">
    <property type="entry name" value="PRK05253.1"/>
    <property type="match status" value="1"/>
</dbReference>
<dbReference type="NCBIfam" id="NF009214">
    <property type="entry name" value="PRK12563.1"/>
    <property type="match status" value="1"/>
</dbReference>
<dbReference type="PANTHER" id="PTHR43196">
    <property type="entry name" value="SULFATE ADENYLYLTRANSFERASE SUBUNIT 2"/>
    <property type="match status" value="1"/>
</dbReference>
<dbReference type="PANTHER" id="PTHR43196:SF1">
    <property type="entry name" value="SULFATE ADENYLYLTRANSFERASE SUBUNIT 2"/>
    <property type="match status" value="1"/>
</dbReference>
<dbReference type="Pfam" id="PF01507">
    <property type="entry name" value="PAPS_reduct"/>
    <property type="match status" value="1"/>
</dbReference>
<dbReference type="PIRSF" id="PIRSF002936">
    <property type="entry name" value="CysDAde_trans"/>
    <property type="match status" value="1"/>
</dbReference>
<dbReference type="SUPFAM" id="SSF52402">
    <property type="entry name" value="Adenine nucleotide alpha hydrolases-like"/>
    <property type="match status" value="1"/>
</dbReference>
<feature type="chain" id="PRO_1000116959" description="Sulfate adenylyltransferase subunit 2">
    <location>
        <begin position="1"/>
        <end position="302"/>
    </location>
</feature>
<comment type="function">
    <text evidence="1">With CysN forms the ATP sulfurylase (ATPS) that catalyzes the adenylation of sulfate producing adenosine 5'-phosphosulfate (APS) and diphosphate, the first enzymatic step in sulfur assimilation pathway. APS synthesis involves the formation of a high-energy phosphoric-sulfuric acid anhydride bond driven by GTP hydrolysis by CysN coupled to ATP hydrolysis by CysD.</text>
</comment>
<comment type="catalytic activity">
    <reaction evidence="1">
        <text>sulfate + ATP + H(+) = adenosine 5'-phosphosulfate + diphosphate</text>
        <dbReference type="Rhea" id="RHEA:18133"/>
        <dbReference type="ChEBI" id="CHEBI:15378"/>
        <dbReference type="ChEBI" id="CHEBI:16189"/>
        <dbReference type="ChEBI" id="CHEBI:30616"/>
        <dbReference type="ChEBI" id="CHEBI:33019"/>
        <dbReference type="ChEBI" id="CHEBI:58243"/>
        <dbReference type="EC" id="2.7.7.4"/>
    </reaction>
</comment>
<comment type="pathway">
    <text evidence="1">Sulfur metabolism; hydrogen sulfide biosynthesis; sulfite from sulfate: step 1/3.</text>
</comment>
<comment type="subunit">
    <text evidence="1">Heterodimer composed of CysD, the smaller subunit, and CysN.</text>
</comment>
<comment type="similarity">
    <text evidence="1">Belongs to the PAPS reductase family. CysD subfamily.</text>
</comment>
<keyword id="KW-0067">ATP-binding</keyword>
<keyword id="KW-0547">Nucleotide-binding</keyword>
<keyword id="KW-0548">Nucleotidyltransferase</keyword>
<keyword id="KW-0808">Transferase</keyword>
<accession>B7N6Y2</accession>
<gene>
    <name evidence="1" type="primary">cysD</name>
    <name type="ordered locus">ECUMN_3076</name>
</gene>
<evidence type="ECO:0000255" key="1">
    <source>
        <dbReference type="HAMAP-Rule" id="MF_00064"/>
    </source>
</evidence>
<protein>
    <recommendedName>
        <fullName evidence="1">Sulfate adenylyltransferase subunit 2</fullName>
        <ecNumber evidence="1">2.7.7.4</ecNumber>
    </recommendedName>
    <alternativeName>
        <fullName evidence="1">ATP-sulfurylase small subunit</fullName>
    </alternativeName>
    <alternativeName>
        <fullName evidence="1">Sulfate adenylate transferase</fullName>
        <shortName evidence="1">SAT</shortName>
    </alternativeName>
</protein>